<protein>
    <recommendedName>
        <fullName evidence="3">Small ribosomal subunit protein eS32</fullName>
    </recommendedName>
    <alternativeName>
        <fullName>60S ribosomal protein L41</fullName>
    </alternativeName>
    <alternativeName>
        <fullName evidence="2">Large ribosomal subunit protein eL41</fullName>
    </alternativeName>
</protein>
<name>RS32_AGABI</name>
<organism>
    <name type="scientific">Agaricus bisporus</name>
    <name type="common">White button mushroom</name>
    <dbReference type="NCBI Taxonomy" id="5341"/>
    <lineage>
        <taxon>Eukaryota</taxon>
        <taxon>Fungi</taxon>
        <taxon>Dikarya</taxon>
        <taxon>Basidiomycota</taxon>
        <taxon>Agaricomycotina</taxon>
        <taxon>Agaricomycetes</taxon>
        <taxon>Agaricomycetidae</taxon>
        <taxon>Agaricales</taxon>
        <taxon>Agaricineae</taxon>
        <taxon>Agaricaceae</taxon>
        <taxon>Agaricus</taxon>
    </lineage>
</organism>
<accession>P78569</accession>
<dbReference type="EMBL" id="X94764">
    <property type="protein sequence ID" value="CAA64390.1"/>
    <property type="molecule type" value="mRNA"/>
</dbReference>
<dbReference type="SMR" id="P78569"/>
<dbReference type="GO" id="GO:1990904">
    <property type="term" value="C:ribonucleoprotein complex"/>
    <property type="evidence" value="ECO:0007669"/>
    <property type="project" value="UniProtKB-KW"/>
</dbReference>
<dbReference type="GO" id="GO:0005840">
    <property type="term" value="C:ribosome"/>
    <property type="evidence" value="ECO:0007669"/>
    <property type="project" value="UniProtKB-KW"/>
</dbReference>
<dbReference type="GO" id="GO:0003735">
    <property type="term" value="F:structural constituent of ribosome"/>
    <property type="evidence" value="ECO:0007669"/>
    <property type="project" value="InterPro"/>
</dbReference>
<dbReference type="GO" id="GO:0006412">
    <property type="term" value="P:translation"/>
    <property type="evidence" value="ECO:0007669"/>
    <property type="project" value="InterPro"/>
</dbReference>
<dbReference type="InterPro" id="IPR007836">
    <property type="entry name" value="Ribosomal_eS32"/>
</dbReference>
<dbReference type="Pfam" id="PF05162">
    <property type="entry name" value="Ribosomal_L41"/>
    <property type="match status" value="1"/>
</dbReference>
<evidence type="ECO:0000256" key="1">
    <source>
        <dbReference type="SAM" id="MobiDB-lite"/>
    </source>
</evidence>
<evidence type="ECO:0000305" key="2"/>
<evidence type="ECO:0000305" key="3">
    <source ref="2"/>
</evidence>
<keyword id="KW-0687">Ribonucleoprotein</keyword>
<keyword id="KW-0689">Ribosomal protein</keyword>
<proteinExistence type="evidence at protein level"/>
<sequence length="25" mass="3413">MREKWKKKRSRRLRRKRRKMRARSK</sequence>
<reference key="1">
    <citation type="journal article" date="1996" name="Appl. Environ. Microbiol.">
        <title>Isolation of expressed sequence tags of Agaricus bisporus and their assignment to chromosomes.</title>
        <authorList>
            <person name="Sonnenberg A.S.M."/>
            <person name="de Groot P.W.J."/>
            <person name="Schaap P.J."/>
            <person name="Baars J.J.P."/>
            <person name="Visser J."/>
            <person name="van Griensven L.J.L.D."/>
        </authorList>
    </citation>
    <scope>NUCLEOTIDE SEQUENCE [MRNA]</scope>
    <source>
        <strain>Horst U1</strain>
    </source>
</reference>
<reference key="2">
    <citation type="unpublished observations" date="2023-10">
        <authorList>
            <person name="Leibundgut M.A."/>
            <person name="Ban N."/>
        </authorList>
    </citation>
    <scope>REVISION OF SUBUNIT</scope>
    <scope>NOMENCLATURE</scope>
</reference>
<gene>
    <name type="primary">rpl41</name>
</gene>
<feature type="chain" id="PRO_0000198071" description="Small ribosomal subunit protein eS32">
    <location>
        <begin position="1"/>
        <end position="25"/>
    </location>
</feature>
<feature type="region of interest" description="Disordered" evidence="1">
    <location>
        <begin position="1"/>
        <end position="25"/>
    </location>
</feature>
<comment type="subunit">
    <text evidence="3">Component of the large ribosomal subunit (Ref.2).</text>
</comment>
<comment type="miscellaneous">
    <text evidence="3">Initially thought to be part of the large ribosomal subunit. Crystal structures show eS32/eL41 to be a small ribosomal subunit forming a bridge at the interface of the 2 subunits.</text>
</comment>
<comment type="similarity">
    <text evidence="2">Belongs to the eukaryotic ribosomal protein eS32 family.</text>
</comment>